<dbReference type="EC" id="2.3.2.6" evidence="1"/>
<dbReference type="EMBL" id="CP000031">
    <property type="protein sequence ID" value="AAV94313.1"/>
    <property type="molecule type" value="Genomic_DNA"/>
</dbReference>
<dbReference type="RefSeq" id="WP_011046757.1">
    <property type="nucleotide sequence ID" value="NC_003911.12"/>
</dbReference>
<dbReference type="SMR" id="Q5LUP4"/>
<dbReference type="STRING" id="246200.SPO1009"/>
<dbReference type="PaxDb" id="246200-SPO1009"/>
<dbReference type="KEGG" id="sil:SPO1009"/>
<dbReference type="eggNOG" id="COG2360">
    <property type="taxonomic scope" value="Bacteria"/>
</dbReference>
<dbReference type="HOGENOM" id="CLU_075045_1_1_5"/>
<dbReference type="OrthoDB" id="9790282at2"/>
<dbReference type="Proteomes" id="UP000001023">
    <property type="component" value="Chromosome"/>
</dbReference>
<dbReference type="GO" id="GO:0005737">
    <property type="term" value="C:cytoplasm"/>
    <property type="evidence" value="ECO:0007669"/>
    <property type="project" value="UniProtKB-SubCell"/>
</dbReference>
<dbReference type="GO" id="GO:0008914">
    <property type="term" value="F:leucyl-tRNA--protein transferase activity"/>
    <property type="evidence" value="ECO:0007669"/>
    <property type="project" value="UniProtKB-UniRule"/>
</dbReference>
<dbReference type="GO" id="GO:0030163">
    <property type="term" value="P:protein catabolic process"/>
    <property type="evidence" value="ECO:0007669"/>
    <property type="project" value="UniProtKB-UniRule"/>
</dbReference>
<dbReference type="FunFam" id="3.40.630.70:FF:000001">
    <property type="entry name" value="Leucyl/phenylalanyl-tRNA--protein transferase"/>
    <property type="match status" value="1"/>
</dbReference>
<dbReference type="Gene3D" id="3.40.630.70">
    <property type="entry name" value="Leucyl/phenylalanyl-tRNA-protein transferase, C-terminal domain"/>
    <property type="match status" value="1"/>
</dbReference>
<dbReference type="HAMAP" id="MF_00688">
    <property type="entry name" value="Leu_Phe_trans"/>
    <property type="match status" value="1"/>
</dbReference>
<dbReference type="InterPro" id="IPR016181">
    <property type="entry name" value="Acyl_CoA_acyltransferase"/>
</dbReference>
<dbReference type="InterPro" id="IPR004616">
    <property type="entry name" value="Leu/Phe-tRNA_Trfase"/>
</dbReference>
<dbReference type="InterPro" id="IPR042203">
    <property type="entry name" value="Leu/Phe-tRNA_Trfase_C"/>
</dbReference>
<dbReference type="NCBIfam" id="TIGR00667">
    <property type="entry name" value="aat"/>
    <property type="match status" value="1"/>
</dbReference>
<dbReference type="PANTHER" id="PTHR30098">
    <property type="entry name" value="LEUCYL/PHENYLALANYL-TRNA--PROTEIN TRANSFERASE"/>
    <property type="match status" value="1"/>
</dbReference>
<dbReference type="PANTHER" id="PTHR30098:SF2">
    <property type="entry name" value="LEUCYL_PHENYLALANYL-TRNA--PROTEIN TRANSFERASE"/>
    <property type="match status" value="1"/>
</dbReference>
<dbReference type="Pfam" id="PF03588">
    <property type="entry name" value="Leu_Phe_trans"/>
    <property type="match status" value="1"/>
</dbReference>
<dbReference type="SUPFAM" id="SSF55729">
    <property type="entry name" value="Acyl-CoA N-acyltransferases (Nat)"/>
    <property type="match status" value="1"/>
</dbReference>
<protein>
    <recommendedName>
        <fullName evidence="1">Leucyl/phenylalanyl-tRNA--protein transferase</fullName>
        <ecNumber evidence="1">2.3.2.6</ecNumber>
    </recommendedName>
    <alternativeName>
        <fullName evidence="1">L/F-transferase</fullName>
    </alternativeName>
    <alternativeName>
        <fullName evidence="1">Leucyltransferase</fullName>
    </alternativeName>
    <alternativeName>
        <fullName evidence="1">Phenyalanyltransferase</fullName>
    </alternativeName>
</protein>
<gene>
    <name evidence="1" type="primary">aat</name>
    <name type="ordered locus">SPO1009</name>
</gene>
<sequence length="210" mass="23321">MSLPPEILLHGYSIGIFPMAEHRNDPDVFWVDPIRRGVFPLNGFHLSRSLARRMRRGGYQVSIDRDFAGVLDGCADRAETWINPEIRASYLALHHLGHAHSLEVWQAGQLIGGVYGVVLGAAFFGESMFSRRTDASKIALAHLVDRLRQTGFALFDTQFLTAHLASLGAVEIPRAEYRRQLERALNGAADFAAVIEQSPQGVIQRITQTS</sequence>
<comment type="function">
    <text evidence="1">Functions in the N-end rule pathway of protein degradation where it conjugates Leu, Phe and, less efficiently, Met from aminoacyl-tRNAs to the N-termini of proteins containing an N-terminal arginine or lysine.</text>
</comment>
<comment type="catalytic activity">
    <reaction evidence="1">
        <text>N-terminal L-lysyl-[protein] + L-leucyl-tRNA(Leu) = N-terminal L-leucyl-L-lysyl-[protein] + tRNA(Leu) + H(+)</text>
        <dbReference type="Rhea" id="RHEA:12340"/>
        <dbReference type="Rhea" id="RHEA-COMP:9613"/>
        <dbReference type="Rhea" id="RHEA-COMP:9622"/>
        <dbReference type="Rhea" id="RHEA-COMP:12670"/>
        <dbReference type="Rhea" id="RHEA-COMP:12671"/>
        <dbReference type="ChEBI" id="CHEBI:15378"/>
        <dbReference type="ChEBI" id="CHEBI:65249"/>
        <dbReference type="ChEBI" id="CHEBI:78442"/>
        <dbReference type="ChEBI" id="CHEBI:78494"/>
        <dbReference type="ChEBI" id="CHEBI:133043"/>
        <dbReference type="EC" id="2.3.2.6"/>
    </reaction>
</comment>
<comment type="catalytic activity">
    <reaction evidence="1">
        <text>N-terminal L-arginyl-[protein] + L-leucyl-tRNA(Leu) = N-terminal L-leucyl-L-arginyl-[protein] + tRNA(Leu) + H(+)</text>
        <dbReference type="Rhea" id="RHEA:50416"/>
        <dbReference type="Rhea" id="RHEA-COMP:9613"/>
        <dbReference type="Rhea" id="RHEA-COMP:9622"/>
        <dbReference type="Rhea" id="RHEA-COMP:12672"/>
        <dbReference type="Rhea" id="RHEA-COMP:12673"/>
        <dbReference type="ChEBI" id="CHEBI:15378"/>
        <dbReference type="ChEBI" id="CHEBI:64719"/>
        <dbReference type="ChEBI" id="CHEBI:78442"/>
        <dbReference type="ChEBI" id="CHEBI:78494"/>
        <dbReference type="ChEBI" id="CHEBI:133044"/>
        <dbReference type="EC" id="2.3.2.6"/>
    </reaction>
</comment>
<comment type="catalytic activity">
    <reaction evidence="1">
        <text>L-phenylalanyl-tRNA(Phe) + an N-terminal L-alpha-aminoacyl-[protein] = an N-terminal L-phenylalanyl-L-alpha-aminoacyl-[protein] + tRNA(Phe)</text>
        <dbReference type="Rhea" id="RHEA:43632"/>
        <dbReference type="Rhea" id="RHEA-COMP:9668"/>
        <dbReference type="Rhea" id="RHEA-COMP:9699"/>
        <dbReference type="Rhea" id="RHEA-COMP:10636"/>
        <dbReference type="Rhea" id="RHEA-COMP:10637"/>
        <dbReference type="ChEBI" id="CHEBI:78442"/>
        <dbReference type="ChEBI" id="CHEBI:78531"/>
        <dbReference type="ChEBI" id="CHEBI:78597"/>
        <dbReference type="ChEBI" id="CHEBI:83561"/>
        <dbReference type="EC" id="2.3.2.6"/>
    </reaction>
</comment>
<comment type="subcellular location">
    <subcellularLocation>
        <location evidence="1">Cytoplasm</location>
    </subcellularLocation>
</comment>
<comment type="similarity">
    <text evidence="1">Belongs to the L/F-transferase family.</text>
</comment>
<feature type="chain" id="PRO_0000258101" description="Leucyl/phenylalanyl-tRNA--protein transferase">
    <location>
        <begin position="1"/>
        <end position="210"/>
    </location>
</feature>
<name>LFTR_RUEPO</name>
<proteinExistence type="inferred from homology"/>
<accession>Q5LUP4</accession>
<evidence type="ECO:0000255" key="1">
    <source>
        <dbReference type="HAMAP-Rule" id="MF_00688"/>
    </source>
</evidence>
<reference key="1">
    <citation type="journal article" date="2004" name="Nature">
        <title>Genome sequence of Silicibacter pomeroyi reveals adaptations to the marine environment.</title>
        <authorList>
            <person name="Moran M.A."/>
            <person name="Buchan A."/>
            <person name="Gonzalez J.M."/>
            <person name="Heidelberg J.F."/>
            <person name="Whitman W.B."/>
            <person name="Kiene R.P."/>
            <person name="Henriksen J.R."/>
            <person name="King G.M."/>
            <person name="Belas R."/>
            <person name="Fuqua C."/>
            <person name="Brinkac L.M."/>
            <person name="Lewis M."/>
            <person name="Johri S."/>
            <person name="Weaver B."/>
            <person name="Pai G."/>
            <person name="Eisen J.A."/>
            <person name="Rahe E."/>
            <person name="Sheldon W.M."/>
            <person name="Ye W."/>
            <person name="Miller T.R."/>
            <person name="Carlton J."/>
            <person name="Rasko D.A."/>
            <person name="Paulsen I.T."/>
            <person name="Ren Q."/>
            <person name="Daugherty S.C."/>
            <person name="DeBoy R.T."/>
            <person name="Dodson R.J."/>
            <person name="Durkin A.S."/>
            <person name="Madupu R."/>
            <person name="Nelson W.C."/>
            <person name="Sullivan S.A."/>
            <person name="Rosovitz M.J."/>
            <person name="Haft D.H."/>
            <person name="Selengut J."/>
            <person name="Ward N."/>
        </authorList>
    </citation>
    <scope>NUCLEOTIDE SEQUENCE [LARGE SCALE GENOMIC DNA]</scope>
    <source>
        <strain>ATCC 700808 / DSM 15171 / DSS-3</strain>
    </source>
</reference>
<reference key="2">
    <citation type="journal article" date="2014" name="Stand. Genomic Sci.">
        <title>An updated genome annotation for the model marine bacterium Ruegeria pomeroyi DSS-3.</title>
        <authorList>
            <person name="Rivers A.R."/>
            <person name="Smith C.B."/>
            <person name="Moran M.A."/>
        </authorList>
    </citation>
    <scope>GENOME REANNOTATION</scope>
    <source>
        <strain>ATCC 700808 / DSM 15171 / DSS-3</strain>
    </source>
</reference>
<keyword id="KW-0012">Acyltransferase</keyword>
<keyword id="KW-0963">Cytoplasm</keyword>
<keyword id="KW-1185">Reference proteome</keyword>
<keyword id="KW-0808">Transferase</keyword>
<organism>
    <name type="scientific">Ruegeria pomeroyi (strain ATCC 700808 / DSM 15171 / DSS-3)</name>
    <name type="common">Silicibacter pomeroyi</name>
    <dbReference type="NCBI Taxonomy" id="246200"/>
    <lineage>
        <taxon>Bacteria</taxon>
        <taxon>Pseudomonadati</taxon>
        <taxon>Pseudomonadota</taxon>
        <taxon>Alphaproteobacteria</taxon>
        <taxon>Rhodobacterales</taxon>
        <taxon>Roseobacteraceae</taxon>
        <taxon>Ruegeria</taxon>
    </lineage>
</organism>